<proteinExistence type="inferred from homology"/>
<organism>
    <name type="scientific">Geobacter metallireducens (strain ATCC 53774 / DSM 7210 / GS-15)</name>
    <dbReference type="NCBI Taxonomy" id="269799"/>
    <lineage>
        <taxon>Bacteria</taxon>
        <taxon>Pseudomonadati</taxon>
        <taxon>Thermodesulfobacteriota</taxon>
        <taxon>Desulfuromonadia</taxon>
        <taxon>Geobacterales</taxon>
        <taxon>Geobacteraceae</taxon>
        <taxon>Geobacter</taxon>
    </lineage>
</organism>
<keyword id="KW-0963">Cytoplasm</keyword>
<keyword id="KW-1185">Reference proteome</keyword>
<keyword id="KW-0704">Schiff base</keyword>
<keyword id="KW-0784">Thiamine biosynthesis</keyword>
<keyword id="KW-0808">Transferase</keyword>
<accession>Q39RH2</accession>
<reference key="1">
    <citation type="journal article" date="2009" name="BMC Microbiol.">
        <title>The genome sequence of Geobacter metallireducens: features of metabolism, physiology and regulation common and dissimilar to Geobacter sulfurreducens.</title>
        <authorList>
            <person name="Aklujkar M."/>
            <person name="Krushkal J."/>
            <person name="DiBartolo G."/>
            <person name="Lapidus A."/>
            <person name="Land M.L."/>
            <person name="Lovley D.R."/>
        </authorList>
    </citation>
    <scope>NUCLEOTIDE SEQUENCE [LARGE SCALE GENOMIC DNA]</scope>
    <source>
        <strain>ATCC 53774 / DSM 7210 / GS-15</strain>
    </source>
</reference>
<dbReference type="EC" id="2.8.1.10" evidence="1"/>
<dbReference type="EMBL" id="CP000148">
    <property type="protein sequence ID" value="ABB33152.1"/>
    <property type="molecule type" value="Genomic_DNA"/>
</dbReference>
<dbReference type="RefSeq" id="WP_004512870.1">
    <property type="nucleotide sequence ID" value="NC_007517.1"/>
</dbReference>
<dbReference type="SMR" id="Q39RH2"/>
<dbReference type="STRING" id="269799.Gmet_2934"/>
<dbReference type="KEGG" id="gme:Gmet_2934"/>
<dbReference type="eggNOG" id="COG2022">
    <property type="taxonomic scope" value="Bacteria"/>
</dbReference>
<dbReference type="HOGENOM" id="CLU_062233_1_0_7"/>
<dbReference type="UniPathway" id="UPA00060"/>
<dbReference type="Proteomes" id="UP000007073">
    <property type="component" value="Chromosome"/>
</dbReference>
<dbReference type="GO" id="GO:0005737">
    <property type="term" value="C:cytoplasm"/>
    <property type="evidence" value="ECO:0007669"/>
    <property type="project" value="UniProtKB-SubCell"/>
</dbReference>
<dbReference type="GO" id="GO:1990107">
    <property type="term" value="F:thiazole synthase activity"/>
    <property type="evidence" value="ECO:0007669"/>
    <property type="project" value="UniProtKB-EC"/>
</dbReference>
<dbReference type="GO" id="GO:0009229">
    <property type="term" value="P:thiamine diphosphate biosynthetic process"/>
    <property type="evidence" value="ECO:0007669"/>
    <property type="project" value="UniProtKB-UniRule"/>
</dbReference>
<dbReference type="CDD" id="cd04728">
    <property type="entry name" value="ThiG"/>
    <property type="match status" value="1"/>
</dbReference>
<dbReference type="FunFam" id="3.20.20.70:FF:000049">
    <property type="entry name" value="Thiazole synthase"/>
    <property type="match status" value="1"/>
</dbReference>
<dbReference type="Gene3D" id="3.20.20.70">
    <property type="entry name" value="Aldolase class I"/>
    <property type="match status" value="1"/>
</dbReference>
<dbReference type="HAMAP" id="MF_00443">
    <property type="entry name" value="ThiG"/>
    <property type="match status" value="1"/>
</dbReference>
<dbReference type="InterPro" id="IPR013785">
    <property type="entry name" value="Aldolase_TIM"/>
</dbReference>
<dbReference type="InterPro" id="IPR033983">
    <property type="entry name" value="Thiazole_synthase_ThiG"/>
</dbReference>
<dbReference type="InterPro" id="IPR008867">
    <property type="entry name" value="ThiG"/>
</dbReference>
<dbReference type="PANTHER" id="PTHR34266">
    <property type="entry name" value="THIAZOLE SYNTHASE"/>
    <property type="match status" value="1"/>
</dbReference>
<dbReference type="PANTHER" id="PTHR34266:SF2">
    <property type="entry name" value="THIAZOLE SYNTHASE"/>
    <property type="match status" value="1"/>
</dbReference>
<dbReference type="Pfam" id="PF05690">
    <property type="entry name" value="ThiG"/>
    <property type="match status" value="1"/>
</dbReference>
<dbReference type="SUPFAM" id="SSF110399">
    <property type="entry name" value="ThiG-like"/>
    <property type="match status" value="1"/>
</dbReference>
<gene>
    <name evidence="1" type="primary">thiG</name>
    <name type="ordered locus">Gmet_2934</name>
</gene>
<evidence type="ECO:0000255" key="1">
    <source>
        <dbReference type="HAMAP-Rule" id="MF_00443"/>
    </source>
</evidence>
<protein>
    <recommendedName>
        <fullName evidence="1">Thiazole synthase</fullName>
        <ecNumber evidence="1">2.8.1.10</ecNumber>
    </recommendedName>
</protein>
<name>THIG_GEOMG</name>
<feature type="chain" id="PRO_0000236341" description="Thiazole synthase">
    <location>
        <begin position="1"/>
        <end position="260"/>
    </location>
</feature>
<feature type="active site" description="Schiff-base intermediate with DXP" evidence="1">
    <location>
        <position position="102"/>
    </location>
</feature>
<feature type="binding site" evidence="1">
    <location>
        <position position="163"/>
    </location>
    <ligand>
        <name>1-deoxy-D-xylulose 5-phosphate</name>
        <dbReference type="ChEBI" id="CHEBI:57792"/>
    </ligand>
</feature>
<feature type="binding site" evidence="1">
    <location>
        <begin position="189"/>
        <end position="190"/>
    </location>
    <ligand>
        <name>1-deoxy-D-xylulose 5-phosphate</name>
        <dbReference type="ChEBI" id="CHEBI:57792"/>
    </ligand>
</feature>
<feature type="binding site" evidence="1">
    <location>
        <begin position="211"/>
        <end position="212"/>
    </location>
    <ligand>
        <name>1-deoxy-D-xylulose 5-phosphate</name>
        <dbReference type="ChEBI" id="CHEBI:57792"/>
    </ligand>
</feature>
<sequence length="260" mass="27648">MSTTNDKLIIAGREFSSRLMVGTGKYASNEQMVAALEASGAEIITVAVRRVNITDRSKESLLDFIDTRKYTLLPNTAGCYTADDAVRTCRLAREAGMSDMVKLEVLGNETTLYPDNEELLKAAKILVKDGFTVLPYTSDDPIICKKLEDIGCAAVMPLGAPIGSGLGIRNPYTIRIIMETVKVPVIVDAGVGTASDAAIAMELGVDGVLMNTGIAGAQNPIAMAEAMNLAVRAGRLAYRAGRIPKKLYATASSPIEGMIE</sequence>
<comment type="function">
    <text evidence="1">Catalyzes the rearrangement of 1-deoxy-D-xylulose 5-phosphate (DXP) to produce the thiazole phosphate moiety of thiamine. Sulfur is provided by the thiocarboxylate moiety of the carrier protein ThiS. In vitro, sulfur can be provided by H(2)S.</text>
</comment>
<comment type="catalytic activity">
    <reaction evidence="1">
        <text>[ThiS sulfur-carrier protein]-C-terminal-Gly-aminoethanethioate + 2-iminoacetate + 1-deoxy-D-xylulose 5-phosphate = [ThiS sulfur-carrier protein]-C-terminal Gly-Gly + 2-[(2R,5Z)-2-carboxy-4-methylthiazol-5(2H)-ylidene]ethyl phosphate + 2 H2O + H(+)</text>
        <dbReference type="Rhea" id="RHEA:26297"/>
        <dbReference type="Rhea" id="RHEA-COMP:12909"/>
        <dbReference type="Rhea" id="RHEA-COMP:19908"/>
        <dbReference type="ChEBI" id="CHEBI:15377"/>
        <dbReference type="ChEBI" id="CHEBI:15378"/>
        <dbReference type="ChEBI" id="CHEBI:57792"/>
        <dbReference type="ChEBI" id="CHEBI:62899"/>
        <dbReference type="ChEBI" id="CHEBI:77846"/>
        <dbReference type="ChEBI" id="CHEBI:90778"/>
        <dbReference type="ChEBI" id="CHEBI:232372"/>
        <dbReference type="EC" id="2.8.1.10"/>
    </reaction>
</comment>
<comment type="pathway">
    <text evidence="1">Cofactor biosynthesis; thiamine diphosphate biosynthesis.</text>
</comment>
<comment type="subunit">
    <text evidence="1">Homotetramer. Forms heterodimers with either ThiH or ThiS.</text>
</comment>
<comment type="subcellular location">
    <subcellularLocation>
        <location evidence="1">Cytoplasm</location>
    </subcellularLocation>
</comment>
<comment type="similarity">
    <text evidence="1">Belongs to the ThiG family.</text>
</comment>